<sequence>MLKREMNIADYDAELWQAMEQEKVRQEEHIELIASENYTSPRVMQAQGSQLTNKYAEGYPGKRYYGGCEYVDVVEQLAIDRAKELFGADYANVQPHSGSQANFAVYTALLQPGDTVLGMNLAQGGHLTHGSPVNFSGKLYNIVPYGIDESGKIDYDEMAKLAKEHKPKMIIGGFSAYSGVVDWAKMREIADSIGAYLFVDMAHVAGLIAAGVYPNPVPHAHVVTTTTHKTLAGPRGGLILAKGGDEELYKKLNSAVFPSAQGGPLMHVIAGKAVALKEAMEPEFKVYQQQVAKNAKAMVEVFLNRGYKVVSGGTENHLFLLDLVDKNLTGKEADAALGRANITVNKNSVPNDPKSPFVTSGIRIGSPAVTRRGFKEAEVKELAGWMCDVLDNINDEATIERVKAKVLDICARFPVYA</sequence>
<protein>
    <recommendedName>
        <fullName evidence="1">Serine hydroxymethyltransferase</fullName>
        <shortName evidence="1">SHMT</shortName>
        <shortName evidence="1">Serine methylase</shortName>
        <ecNumber evidence="1">2.1.2.1</ecNumber>
    </recommendedName>
</protein>
<reference key="1">
    <citation type="journal article" date="2009" name="BMC Genomics">
        <title>Pseudogene accumulation in the evolutionary histories of Salmonella enterica serovars Paratyphi A and Typhi.</title>
        <authorList>
            <person name="Holt K.E."/>
            <person name="Thomson N.R."/>
            <person name="Wain J."/>
            <person name="Langridge G.C."/>
            <person name="Hasan R."/>
            <person name="Bhutta Z.A."/>
            <person name="Quail M.A."/>
            <person name="Norbertczak H."/>
            <person name="Walker D."/>
            <person name="Simmonds M."/>
            <person name="White B."/>
            <person name="Bason N."/>
            <person name="Mungall K."/>
            <person name="Dougan G."/>
            <person name="Parkhill J."/>
        </authorList>
    </citation>
    <scope>NUCLEOTIDE SEQUENCE [LARGE SCALE GENOMIC DNA]</scope>
    <source>
        <strain>AKU_12601</strain>
    </source>
</reference>
<accession>B5BAV4</accession>
<gene>
    <name evidence="1" type="primary">glyA</name>
    <name type="ordered locus">SSPA0293</name>
</gene>
<keyword id="KW-0028">Amino-acid biosynthesis</keyword>
<keyword id="KW-0963">Cytoplasm</keyword>
<keyword id="KW-0554">One-carbon metabolism</keyword>
<keyword id="KW-0663">Pyridoxal phosphate</keyword>
<keyword id="KW-0808">Transferase</keyword>
<organism>
    <name type="scientific">Salmonella paratyphi A (strain AKU_12601)</name>
    <dbReference type="NCBI Taxonomy" id="554290"/>
    <lineage>
        <taxon>Bacteria</taxon>
        <taxon>Pseudomonadati</taxon>
        <taxon>Pseudomonadota</taxon>
        <taxon>Gammaproteobacteria</taxon>
        <taxon>Enterobacterales</taxon>
        <taxon>Enterobacteriaceae</taxon>
        <taxon>Salmonella</taxon>
    </lineage>
</organism>
<dbReference type="EC" id="2.1.2.1" evidence="1"/>
<dbReference type="EMBL" id="FM200053">
    <property type="protein sequence ID" value="CAR58410.1"/>
    <property type="molecule type" value="Genomic_DNA"/>
</dbReference>
<dbReference type="RefSeq" id="WP_000919178.1">
    <property type="nucleotide sequence ID" value="NC_011147.1"/>
</dbReference>
<dbReference type="SMR" id="B5BAV4"/>
<dbReference type="KEGG" id="sek:SSPA0293"/>
<dbReference type="HOGENOM" id="CLU_022477_2_1_6"/>
<dbReference type="UniPathway" id="UPA00193"/>
<dbReference type="UniPathway" id="UPA00288">
    <property type="reaction ID" value="UER01023"/>
</dbReference>
<dbReference type="Proteomes" id="UP000001869">
    <property type="component" value="Chromosome"/>
</dbReference>
<dbReference type="GO" id="GO:0005829">
    <property type="term" value="C:cytosol"/>
    <property type="evidence" value="ECO:0007669"/>
    <property type="project" value="TreeGrafter"/>
</dbReference>
<dbReference type="GO" id="GO:0004372">
    <property type="term" value="F:glycine hydroxymethyltransferase activity"/>
    <property type="evidence" value="ECO:0007669"/>
    <property type="project" value="UniProtKB-UniRule"/>
</dbReference>
<dbReference type="GO" id="GO:0030170">
    <property type="term" value="F:pyridoxal phosphate binding"/>
    <property type="evidence" value="ECO:0007669"/>
    <property type="project" value="UniProtKB-UniRule"/>
</dbReference>
<dbReference type="GO" id="GO:0019264">
    <property type="term" value="P:glycine biosynthetic process from serine"/>
    <property type="evidence" value="ECO:0007669"/>
    <property type="project" value="UniProtKB-UniRule"/>
</dbReference>
<dbReference type="GO" id="GO:0035999">
    <property type="term" value="P:tetrahydrofolate interconversion"/>
    <property type="evidence" value="ECO:0007669"/>
    <property type="project" value="UniProtKB-UniRule"/>
</dbReference>
<dbReference type="CDD" id="cd00378">
    <property type="entry name" value="SHMT"/>
    <property type="match status" value="1"/>
</dbReference>
<dbReference type="FunFam" id="3.40.640.10:FF:000001">
    <property type="entry name" value="Serine hydroxymethyltransferase"/>
    <property type="match status" value="1"/>
</dbReference>
<dbReference type="FunFam" id="3.90.1150.10:FF:000003">
    <property type="entry name" value="Serine hydroxymethyltransferase"/>
    <property type="match status" value="1"/>
</dbReference>
<dbReference type="Gene3D" id="3.90.1150.10">
    <property type="entry name" value="Aspartate Aminotransferase, domain 1"/>
    <property type="match status" value="1"/>
</dbReference>
<dbReference type="Gene3D" id="3.40.640.10">
    <property type="entry name" value="Type I PLP-dependent aspartate aminotransferase-like (Major domain)"/>
    <property type="match status" value="1"/>
</dbReference>
<dbReference type="HAMAP" id="MF_00051">
    <property type="entry name" value="SHMT"/>
    <property type="match status" value="1"/>
</dbReference>
<dbReference type="InterPro" id="IPR015424">
    <property type="entry name" value="PyrdxlP-dep_Trfase"/>
</dbReference>
<dbReference type="InterPro" id="IPR015421">
    <property type="entry name" value="PyrdxlP-dep_Trfase_major"/>
</dbReference>
<dbReference type="InterPro" id="IPR015422">
    <property type="entry name" value="PyrdxlP-dep_Trfase_small"/>
</dbReference>
<dbReference type="InterPro" id="IPR001085">
    <property type="entry name" value="Ser_HO-MeTrfase"/>
</dbReference>
<dbReference type="InterPro" id="IPR049943">
    <property type="entry name" value="Ser_HO-MeTrfase-like"/>
</dbReference>
<dbReference type="InterPro" id="IPR019798">
    <property type="entry name" value="Ser_HO-MeTrfase_PLP_BS"/>
</dbReference>
<dbReference type="InterPro" id="IPR039429">
    <property type="entry name" value="SHMT-like_dom"/>
</dbReference>
<dbReference type="NCBIfam" id="NF000586">
    <property type="entry name" value="PRK00011.1"/>
    <property type="match status" value="1"/>
</dbReference>
<dbReference type="PANTHER" id="PTHR11680">
    <property type="entry name" value="SERINE HYDROXYMETHYLTRANSFERASE"/>
    <property type="match status" value="1"/>
</dbReference>
<dbReference type="PANTHER" id="PTHR11680:SF50">
    <property type="entry name" value="SERINE HYDROXYMETHYLTRANSFERASE"/>
    <property type="match status" value="1"/>
</dbReference>
<dbReference type="Pfam" id="PF00464">
    <property type="entry name" value="SHMT"/>
    <property type="match status" value="1"/>
</dbReference>
<dbReference type="PIRSF" id="PIRSF000412">
    <property type="entry name" value="SHMT"/>
    <property type="match status" value="1"/>
</dbReference>
<dbReference type="SUPFAM" id="SSF53383">
    <property type="entry name" value="PLP-dependent transferases"/>
    <property type="match status" value="1"/>
</dbReference>
<dbReference type="PROSITE" id="PS00096">
    <property type="entry name" value="SHMT"/>
    <property type="match status" value="1"/>
</dbReference>
<name>GLYA_SALPK</name>
<comment type="function">
    <text evidence="1">Catalyzes the reversible interconversion of serine and glycine with tetrahydrofolate (THF) serving as the one-carbon carrier. This reaction serves as the major source of one-carbon groups required for the biosynthesis of purines, thymidylate, methionine, and other important biomolecules. Also exhibits THF-independent aldolase activity toward beta-hydroxyamino acids, producing glycine and aldehydes, via a retro-aldol mechanism.</text>
</comment>
<comment type="catalytic activity">
    <reaction evidence="1">
        <text>(6R)-5,10-methylene-5,6,7,8-tetrahydrofolate + glycine + H2O = (6S)-5,6,7,8-tetrahydrofolate + L-serine</text>
        <dbReference type="Rhea" id="RHEA:15481"/>
        <dbReference type="ChEBI" id="CHEBI:15377"/>
        <dbReference type="ChEBI" id="CHEBI:15636"/>
        <dbReference type="ChEBI" id="CHEBI:33384"/>
        <dbReference type="ChEBI" id="CHEBI:57305"/>
        <dbReference type="ChEBI" id="CHEBI:57453"/>
        <dbReference type="EC" id="2.1.2.1"/>
    </reaction>
</comment>
<comment type="cofactor">
    <cofactor evidence="1">
        <name>pyridoxal 5'-phosphate</name>
        <dbReference type="ChEBI" id="CHEBI:597326"/>
    </cofactor>
</comment>
<comment type="pathway">
    <text evidence="1">One-carbon metabolism; tetrahydrofolate interconversion.</text>
</comment>
<comment type="pathway">
    <text evidence="1">Amino-acid biosynthesis; glycine biosynthesis; glycine from L-serine: step 1/1.</text>
</comment>
<comment type="subunit">
    <text evidence="1">Homodimer.</text>
</comment>
<comment type="subcellular location">
    <subcellularLocation>
        <location evidence="1">Cytoplasm</location>
    </subcellularLocation>
</comment>
<comment type="similarity">
    <text evidence="1">Belongs to the SHMT family.</text>
</comment>
<feature type="chain" id="PRO_1000091576" description="Serine hydroxymethyltransferase">
    <location>
        <begin position="1"/>
        <end position="417"/>
    </location>
</feature>
<feature type="binding site" evidence="1">
    <location>
        <position position="121"/>
    </location>
    <ligand>
        <name>(6S)-5,6,7,8-tetrahydrofolate</name>
        <dbReference type="ChEBI" id="CHEBI:57453"/>
    </ligand>
</feature>
<feature type="binding site" evidence="1">
    <location>
        <begin position="125"/>
        <end position="127"/>
    </location>
    <ligand>
        <name>(6S)-5,6,7,8-tetrahydrofolate</name>
        <dbReference type="ChEBI" id="CHEBI:57453"/>
    </ligand>
</feature>
<feature type="binding site" evidence="1">
    <location>
        <begin position="355"/>
        <end position="357"/>
    </location>
    <ligand>
        <name>(6S)-5,6,7,8-tetrahydrofolate</name>
        <dbReference type="ChEBI" id="CHEBI:57453"/>
    </ligand>
</feature>
<feature type="site" description="Plays an important role in substrate specificity" evidence="1">
    <location>
        <position position="228"/>
    </location>
</feature>
<feature type="modified residue" description="N6-(pyridoxal phosphate)lysine" evidence="1">
    <location>
        <position position="229"/>
    </location>
</feature>
<proteinExistence type="inferred from homology"/>
<evidence type="ECO:0000255" key="1">
    <source>
        <dbReference type="HAMAP-Rule" id="MF_00051"/>
    </source>
</evidence>